<name>TX1_STRGF</name>
<comment type="function">
    <text evidence="1 3 4 5 6 7">Reversibly inhibits potassium currents in oocytes expressing Kv2.1/KCNB1 channels (Kd=2.7 uM) (PubMed:15051809). Acts by shifting activation of the channel to more depolarized voltages. The toxin may bind to the S3b-S4 helices of the voltage sensor paddle. One, two, three or four toxin molecules may bind the Kv2.1/KCNB1 channel. It shows low to moderate affinity for lipid bilayers (PubMed:29703751). It partitions into the bilayer membrane, where it stabilizes at the water/membrane interface (PubMed:17071657, PubMed:20643084).</text>
</comment>
<comment type="subcellular location">
    <subcellularLocation>
        <location evidence="1">Secreted</location>
    </subcellularLocation>
</comment>
<comment type="tissue specificity">
    <text evidence="16">Expressed by the venom gland.</text>
</comment>
<comment type="domain">
    <text evidence="3">The presence of a 'disulfide through disulfide knot' structurally defines this protein as a knottin.</text>
</comment>
<comment type="mass spectrometry" mass="3775.7" error="0.6" method="MALDI" evidence="1"/>
<comment type="mass spectrometry" mass="3776.7" method="MALDI" evidence="2"/>
<comment type="miscellaneous">
    <text evidence="7">Shows no or very low activity on Nav1.2/SCN2A, Nav1.4/SCN4A, Nav1.5/SCN5A, Nav1.6/SCN8A, and Nav1.7/SCN9A (IC(50)&gt;3 uM).</text>
</comment>
<comment type="similarity">
    <text evidence="15">Belongs to the neurotoxin 10 (Hwtx-1) family. 09 (HaTx) subfamily.</text>
</comment>
<evidence type="ECO:0000269" key="1">
    <source>
    </source>
</evidence>
<evidence type="ECO:0000269" key="2">
    <source>
    </source>
</evidence>
<evidence type="ECO:0000269" key="3">
    <source>
    </source>
</evidence>
<evidence type="ECO:0000269" key="4">
    <source>
    </source>
</evidence>
<evidence type="ECO:0000269" key="5">
    <source>
    </source>
</evidence>
<evidence type="ECO:0000269" key="6">
    <source>
    </source>
</evidence>
<evidence type="ECO:0000269" key="7">
    <source>
    </source>
</evidence>
<evidence type="ECO:0000303" key="8">
    <source>
    </source>
</evidence>
<evidence type="ECO:0000303" key="9">
    <source>
    </source>
</evidence>
<evidence type="ECO:0000303" key="10">
    <source>
    </source>
</evidence>
<evidence type="ECO:0000303" key="11">
    <source>
    </source>
</evidence>
<evidence type="ECO:0000303" key="12">
    <source>
    </source>
</evidence>
<evidence type="ECO:0000303" key="13">
    <source>
    </source>
</evidence>
<evidence type="ECO:0000303" key="14">
    <source>
    </source>
</evidence>
<evidence type="ECO:0000305" key="15"/>
<evidence type="ECO:0000305" key="16">
    <source>
    </source>
</evidence>
<evidence type="ECO:0000312" key="17">
    <source>
        <dbReference type="PDB" id="1LA4"/>
    </source>
</evidence>
<evidence type="ECO:0007829" key="18">
    <source>
        <dbReference type="PDB" id="1LA4"/>
    </source>
</evidence>
<accession>P56855</accession>
<feature type="peptide" id="PRO_0000045024" description="Kappa-theraphotoxin-Scg1a" evidence="1">
    <location>
        <begin position="1"/>
        <end position="34"/>
    </location>
</feature>
<feature type="region of interest" description="Involved in active face" evidence="4">
    <location>
        <begin position="4"/>
        <end position="6"/>
    </location>
</feature>
<feature type="site" description="May be involved in interaction with voltage sensor" evidence="4">
    <location>
        <position position="3"/>
    </location>
</feature>
<feature type="site" description="May be involved in interaction with voltage sensor" evidence="4">
    <location>
        <position position="5"/>
    </location>
</feature>
<feature type="site" description="May be involved in interaction with voltage sensor" evidence="4">
    <location>
        <position position="6"/>
    </location>
</feature>
<feature type="site" description="May be involved in interaction with voltage sensor" evidence="4">
    <location>
        <position position="22"/>
    </location>
</feature>
<feature type="site" description="May be involved in interaction with voltage sensor, positioned at 9 angstroms from the center of the bilayer" evidence="4">
    <location>
        <position position="30"/>
    </location>
</feature>
<feature type="disulfide bond" evidence="3 17">
    <location>
        <begin position="2"/>
        <end position="16"/>
    </location>
</feature>
<feature type="disulfide bond" evidence="3 17">
    <location>
        <begin position="9"/>
        <end position="21"/>
    </location>
</feature>
<feature type="disulfide bond" evidence="3 17">
    <location>
        <begin position="15"/>
        <end position="28"/>
    </location>
</feature>
<feature type="mutagenesis site" description="No change in interaction with Kv2.1 channels." evidence="4">
    <original>T</original>
    <variation>A</variation>
    <location>
        <position position="1"/>
    </location>
</feature>
<feature type="mutagenesis site" description="Exhibits &lt;150-fold weaker interaction with Kv2.1 channels." evidence="4">
    <original>R</original>
    <variation>A</variation>
    <location>
        <position position="3"/>
    </location>
</feature>
<feature type="mutagenesis site" description="Exhibits 7.5-fold weaker interaction with Kv2.1 channels." evidence="4">
    <original>Y</original>
    <variation>A</variation>
    <location>
        <position position="4"/>
    </location>
</feature>
<feature type="mutagenesis site" description="Exhibits &lt;150-fold weaker interaction with Kv2.1 channels." evidence="4">
    <original>L</original>
    <variation>A</variation>
    <location>
        <position position="5"/>
    </location>
</feature>
<feature type="mutagenesis site" description="Exhibits &lt;300-fold weaker interaction with Kv2.1 channels." evidence="4">
    <original>F</original>
    <variation>A</variation>
    <location>
        <position position="6"/>
    </location>
</feature>
<feature type="mutagenesis site" description="No change in interaction with Kv2.1 channels." evidence="4">
    <original>G</original>
    <variation>A</variation>
    <location>
        <position position="7"/>
    </location>
</feature>
<feature type="mutagenesis site" description="No change in interaction with Kv2.1 channels." evidence="4">
    <original>G</original>
    <variation>A</variation>
    <location>
        <position position="8"/>
    </location>
</feature>
<feature type="mutagenesis site" description="No change in interaction with Kv2.1 channels." evidence="4">
    <original>K</original>
    <variation>A</variation>
    <location>
        <position position="10"/>
    </location>
</feature>
<feature type="mutagenesis site" description="No change in interaction with Kv2.1 channels." evidence="4">
    <original>T</original>
    <variation>A</variation>
    <location>
        <position position="11"/>
    </location>
</feature>
<feature type="mutagenesis site" description="No change in interaction with Kv2.1 channels." evidence="4">
    <original>T</original>
    <variation>A</variation>
    <location>
        <position position="12"/>
    </location>
</feature>
<feature type="mutagenesis site" description="No change in interaction with Kv2.1 channels." evidence="4">
    <original>A</original>
    <variation>S</variation>
    <location>
        <position position="13"/>
    </location>
</feature>
<feature type="mutagenesis site" description="Exhibits 6-fold tigher interaction with Kv2.1 channels." evidence="4">
    <original>D</original>
    <variation>A</variation>
    <location>
        <position position="14"/>
    </location>
</feature>
<feature type="mutagenesis site" description="No change in interaction with Kv2.1." evidence="4">
    <original>K</original>
    <variation>A</variation>
    <location>
        <position position="17"/>
    </location>
</feature>
<feature type="mutagenesis site" description="Exhibits 7.5-fold weaker interaction with Kv2.1 channels." evidence="4">
    <original>H</original>
    <variation>A</variation>
    <location>
        <position position="18"/>
    </location>
</feature>
<feature type="mutagenesis site" description="No change in interaction with Kv2.1 channels." evidence="4">
    <original>A</original>
    <variation>S</variation>
    <location>
        <position position="20"/>
    </location>
</feature>
<feature type="mutagenesis site" description="Exhibits &lt;150-fold weaker interaction with Kv2.1 channels." evidence="4">
    <original>R</original>
    <variation>A</variation>
    <location>
        <position position="22"/>
    </location>
</feature>
<feature type="mutagenesis site" description="No change in interaction with Kv2.1 channels." evidence="4">
    <original>S</original>
    <variation>A</variation>
    <location>
        <position position="23"/>
    </location>
</feature>
<feature type="mutagenesis site" description="Exhibits 20-fold tigher interaction with Kv2.1 channels." evidence="4">
    <original>D</original>
    <variation>A</variation>
    <location>
        <position position="24"/>
    </location>
</feature>
<feature type="mutagenesis site" description="No change in interaction with Kv2.1 channels." evidence="4">
    <original>G</original>
    <variation>A</variation>
    <location>
        <position position="25"/>
    </location>
</feature>
<feature type="mutagenesis site" description="No change in interaction with Kv2.1 channels." evidence="4">
    <original>K</original>
    <variation>A</variation>
    <location>
        <position position="26"/>
    </location>
</feature>
<feature type="mutagenesis site" description="Exhibits 7.5-fold weaker interaction with Kv2.1 channels." evidence="4">
    <original>A</original>
    <variation>S</variation>
    <location>
        <position position="29"/>
    </location>
</feature>
<feature type="mutagenesis site" description="Exhibits &lt;300-fold weaker interaction with Kv2.1 channels." evidence="4">
    <original>W</original>
    <variation>A</variation>
    <location>
        <position position="30"/>
    </location>
</feature>
<feature type="mutagenesis site" description="Exhibits 11.3-fold weaker interaction with Kv2.1 channels." evidence="4">
    <original>D</original>
    <variation>A</variation>
    <location>
        <position position="31"/>
    </location>
</feature>
<feature type="mutagenesis site" description="No change in interaction with Kv2.1 channels." evidence="4">
    <original>G</original>
    <variation>A</variation>
    <location>
        <position position="32"/>
    </location>
</feature>
<feature type="mutagenesis site" description="No change in interaction with Kv2.1 channels." evidence="4">
    <original>T</original>
    <variation>A</variation>
    <location>
        <position position="33"/>
    </location>
</feature>
<feature type="mutagenesis site" description="No change in interaction with Kv2.1 channels." evidence="4">
    <original>F</original>
    <variation>A</variation>
    <location>
        <position position="34"/>
    </location>
</feature>
<feature type="helix" evidence="18">
    <location>
        <begin position="12"/>
        <end position="14"/>
    </location>
</feature>
<feature type="turn" evidence="18">
    <location>
        <begin position="23"/>
        <end position="26"/>
    </location>
</feature>
<dbReference type="PDB" id="1LA4">
    <property type="method" value="NMR"/>
    <property type="chains" value="A=1-34"/>
</dbReference>
<dbReference type="PDBsum" id="1LA4"/>
<dbReference type="SMR" id="P56855"/>
<dbReference type="IntAct" id="P56855">
    <property type="interactions" value="1"/>
</dbReference>
<dbReference type="ArachnoServer" id="AS000227">
    <property type="toxin name" value="kappa-theraphotoxin-Scg1a"/>
</dbReference>
<dbReference type="EvolutionaryTrace" id="P56855"/>
<dbReference type="GO" id="GO:0005615">
    <property type="term" value="C:extracellular space"/>
    <property type="evidence" value="ECO:0000314"/>
    <property type="project" value="UniProtKB"/>
</dbReference>
<dbReference type="GO" id="GO:0008200">
    <property type="term" value="F:ion channel inhibitor activity"/>
    <property type="evidence" value="ECO:0007669"/>
    <property type="project" value="InterPro"/>
</dbReference>
<dbReference type="GO" id="GO:0015459">
    <property type="term" value="F:potassium channel regulator activity"/>
    <property type="evidence" value="ECO:0007669"/>
    <property type="project" value="UniProtKB-KW"/>
</dbReference>
<dbReference type="GO" id="GO:0090729">
    <property type="term" value="F:toxin activity"/>
    <property type="evidence" value="ECO:0007669"/>
    <property type="project" value="UniProtKB-KW"/>
</dbReference>
<dbReference type="InterPro" id="IPR011696">
    <property type="entry name" value="Huwentoxin-1"/>
</dbReference>
<dbReference type="Pfam" id="PF07740">
    <property type="entry name" value="Toxin_12"/>
    <property type="match status" value="1"/>
</dbReference>
<dbReference type="SUPFAM" id="SSF57059">
    <property type="entry name" value="omega toxin-like"/>
    <property type="match status" value="1"/>
</dbReference>
<keyword id="KW-0002">3D-structure</keyword>
<keyword id="KW-0903">Direct protein sequencing</keyword>
<keyword id="KW-1015">Disulfide bond</keyword>
<keyword id="KW-0872">Ion channel impairing toxin</keyword>
<keyword id="KW-0960">Knottin</keyword>
<keyword id="KW-0528">Neurotoxin</keyword>
<keyword id="KW-0632">Potassium channel impairing toxin</keyword>
<keyword id="KW-0964">Secreted</keyword>
<keyword id="KW-0800">Toxin</keyword>
<keyword id="KW-1220">Voltage-gated potassium channel impairing toxin</keyword>
<protein>
    <recommendedName>
        <fullName evidence="15">Kappa-theraphotoxin-Scg1a</fullName>
        <shortName evidence="15">Kappa-TRTX-Scg1a</shortName>
    </recommendedName>
    <alternativeName>
        <fullName evidence="8 9 10 12">SGTx1</fullName>
        <shortName evidence="11 13">SGTx</shortName>
    </alternativeName>
    <alternativeName>
        <fullName evidence="14">SgTx-I</fullName>
    </alternativeName>
</protein>
<proteinExistence type="evidence at protein level"/>
<organism>
    <name type="scientific">Stromatopelma calceatum griseipes</name>
    <name type="common">Feather leg baboon tarantula</name>
    <name type="synonym">Scodra griseipes</name>
    <dbReference type="NCBI Taxonomy" id="118974"/>
    <lineage>
        <taxon>Eukaryota</taxon>
        <taxon>Metazoa</taxon>
        <taxon>Ecdysozoa</taxon>
        <taxon>Arthropoda</taxon>
        <taxon>Chelicerata</taxon>
        <taxon>Arachnida</taxon>
        <taxon>Araneae</taxon>
        <taxon>Mygalomorphae</taxon>
        <taxon>Theraphosidae</taxon>
        <taxon>Stromatopelma</taxon>
    </lineage>
</organism>
<sequence length="34" mass="3782">TCRYLFGGCKTTADCCKHLACRSDGKYCAWDGTF</sequence>
<reference key="1">
    <citation type="journal article" date="1999" name="Eur. J. Biochem.">
        <title>Isolation, amino acid sequence and functional assays of SGTx1. The first toxin purified from the venom of the spider Scodra griseipes.</title>
        <authorList>
            <person name="Marvin L."/>
            <person name="De E."/>
            <person name="Cosette P."/>
            <person name="Gagnon J."/>
            <person name="Molle G."/>
            <person name="Lange C."/>
        </authorList>
    </citation>
    <scope>PROTEIN SEQUENCE</scope>
    <scope>SUBCELLULAR LOCATION</scope>
    <scope>FUNCTION</scope>
    <scope>MASS SPECTROMETRY</scope>
    <source>
        <tissue>Venom</tissue>
    </source>
</reference>
<reference key="2">
    <citation type="journal article" date="2001" name="Rapid Commun. Mass Spectrom.">
        <title>Conformational study of a new SGTx1 neurotoxin from the spider Scodra griseipes using mass spectrometry.</title>
        <authorList>
            <person name="Marvin L."/>
            <person name="Lange C."/>
        </authorList>
    </citation>
    <scope>MASS SPECTROMETRY</scope>
</reference>
<reference key="3">
    <citation type="journal article" date="2004" name="J. Gen. Physiol.">
        <title>Molecular surface of tarantula toxins interacting with voltage sensors in K(v) channels.</title>
        <authorList>
            <person name="Wang J.M."/>
            <person name="Roh S.H."/>
            <person name="Kim S."/>
            <person name="Lee C.W."/>
            <person name="Kim J.I."/>
            <person name="Swartz K.J."/>
        </authorList>
    </citation>
    <scope>FUNCTION</scope>
    <scope>MUTAGENESIS OF THR-1; ARG-3; TYR-4; LEU-5; PHE-6; GLY-7; GLY-8; LYS-10; THR-11; THR-12; ALA-13; ASP-14; LYS-17; HIS-18; ALA-20; ARG-22; SER-23; ASP-24; GLY-25; LYS-26; ALA-29; TRP-30; ASP-31; GLY-32; THR-33 AND PHE-34</scope>
    <scope>SYNTHESIS</scope>
    <scope>IDENTIFICATION OF THE ACTIVE FACE</scope>
</reference>
<reference key="4">
    <citation type="journal article" date="2007" name="Biophys. J.">
        <title>SGTx1, a Kv channel gating-modifier toxin, binds to the interfacial region of lipid bilayers.</title>
        <authorList>
            <person name="Wee C.L."/>
            <person name="Bemporad D."/>
            <person name="Sands Z.A."/>
            <person name="Gavaghan D."/>
            <person name="Sansom M.S."/>
        </authorList>
    </citation>
    <scope>MEMBRANE-PARTITIONING</scope>
</reference>
<reference key="5">
    <citation type="journal article" date="2010" name="Biophys. J.">
        <title>Structure and orientation of a voltage-sensor toxin in lipid membranes.</title>
        <authorList>
            <person name="Jung H.H."/>
            <person name="Jung H.J."/>
            <person name="Milescu M."/>
            <person name="Lee C.W."/>
            <person name="Lee S."/>
            <person name="Lee J.Y."/>
            <person name="Eu Y.-J."/>
            <person name="Kim H.H."/>
            <person name="Swartz K.J."/>
            <person name="Kim J.I."/>
        </authorList>
    </citation>
    <scope>MEMBRANE-PARTITIONING</scope>
    <scope>SITES ARG-3; LEU-5; PHE-6; ARG-22 AND TRP-30</scope>
    <scope>SYNTHESIS</scope>
</reference>
<reference key="6">
    <citation type="journal article" date="2018" name="J. Biol. Chem.">
        <title>Gating modifier toxins isolated from spider venom: modulation of voltage-gated sodium channels and the role of lipid membranes.</title>
        <authorList>
            <person name="Agwa A.J."/>
            <person name="Peigneur S."/>
            <person name="Chow C.Y."/>
            <person name="Lawrence N."/>
            <person name="Craik D.J."/>
            <person name="Tytgat J."/>
            <person name="King G.F."/>
            <person name="Henriques S.T."/>
            <person name="Schroeder C.I."/>
        </authorList>
    </citation>
    <scope>FUNCTION</scope>
    <scope>SYNTHESIS</scope>
</reference>
<reference key="7">
    <citation type="journal article" date="2004" name="Biochemistry">
        <title>Solution structure and functional characterization of SGTx1, a modifier of Kv2.1 channel gating.</title>
        <authorList>
            <person name="Lee C.W."/>
            <person name="Kim S."/>
            <person name="Roh S.H."/>
            <person name="Endoh H."/>
            <person name="Kodera Y."/>
            <person name="Maeda T."/>
            <person name="Kohno T."/>
            <person name="Wang J.M."/>
            <person name="Swartz K.J."/>
            <person name="Kim J.I."/>
        </authorList>
    </citation>
    <scope>STRUCTURE BY NMR</scope>
    <scope>SYNTHESIS</scope>
    <scope>DISULFIDE BONDS</scope>
    <scope>FUNCTION</scope>
</reference>